<dbReference type="EC" id="2.3.2.23"/>
<dbReference type="EMBL" id="BC058543">
    <property type="protein sequence ID" value="AAH58543.1"/>
    <property type="molecule type" value="mRNA"/>
</dbReference>
<dbReference type="EMBL" id="BC116979">
    <property type="protein sequence ID" value="AAI16980.1"/>
    <property type="status" value="ALT_INIT"/>
    <property type="molecule type" value="mRNA"/>
</dbReference>
<dbReference type="EMBL" id="BC116981">
    <property type="protein sequence ID" value="AAI16982.1"/>
    <property type="status" value="ALT_INIT"/>
    <property type="molecule type" value="mRNA"/>
</dbReference>
<dbReference type="RefSeq" id="NP_001138634.1">
    <property type="nucleotide sequence ID" value="NM_001145162.1"/>
</dbReference>
<dbReference type="SMR" id="A0PJN4"/>
<dbReference type="BioGRID" id="218441">
    <property type="interactions" value="1"/>
</dbReference>
<dbReference type="FunCoup" id="A0PJN4">
    <property type="interactions" value="878"/>
</dbReference>
<dbReference type="STRING" id="10090.ENSMUSP00000070906"/>
<dbReference type="GlyGen" id="A0PJN4">
    <property type="glycosylation" value="1 site"/>
</dbReference>
<dbReference type="iPTMnet" id="A0PJN4"/>
<dbReference type="PhosphoSitePlus" id="A0PJN4"/>
<dbReference type="PaxDb" id="10090-ENSMUSP00000070906"/>
<dbReference type="ProteomicsDB" id="298084"/>
<dbReference type="DNASU" id="76980"/>
<dbReference type="GeneID" id="76980"/>
<dbReference type="KEGG" id="mmu:76980"/>
<dbReference type="AGR" id="MGI:1924230"/>
<dbReference type="CTD" id="134111"/>
<dbReference type="MGI" id="MGI:1924230">
    <property type="gene designation" value="Ube2ql1"/>
</dbReference>
<dbReference type="eggNOG" id="KOG0897">
    <property type="taxonomic scope" value="Eukaryota"/>
</dbReference>
<dbReference type="InParanoid" id="A0PJN4"/>
<dbReference type="OrthoDB" id="109543at2759"/>
<dbReference type="PhylomeDB" id="A0PJN4"/>
<dbReference type="UniPathway" id="UPA00143"/>
<dbReference type="BioGRID-ORCS" id="76980">
    <property type="hits" value="1 hit in 79 CRISPR screens"/>
</dbReference>
<dbReference type="PRO" id="PR:A0PJN4"/>
<dbReference type="Proteomes" id="UP000000589">
    <property type="component" value="Unplaced"/>
</dbReference>
<dbReference type="RNAct" id="A0PJN4">
    <property type="molecule type" value="protein"/>
</dbReference>
<dbReference type="GO" id="GO:0005634">
    <property type="term" value="C:nucleus"/>
    <property type="evidence" value="ECO:0000250"/>
    <property type="project" value="UniProtKB"/>
</dbReference>
<dbReference type="GO" id="GO:0005524">
    <property type="term" value="F:ATP binding"/>
    <property type="evidence" value="ECO:0007669"/>
    <property type="project" value="UniProtKB-KW"/>
</dbReference>
<dbReference type="GO" id="GO:0061631">
    <property type="term" value="F:ubiquitin conjugating enzyme activity"/>
    <property type="evidence" value="ECO:0000266"/>
    <property type="project" value="MGI"/>
</dbReference>
<dbReference type="GO" id="GO:0016567">
    <property type="term" value="P:protein ubiquitination"/>
    <property type="evidence" value="ECO:0007669"/>
    <property type="project" value="UniProtKB-UniPathway"/>
</dbReference>
<dbReference type="CDD" id="cd23802">
    <property type="entry name" value="UBCc_UBE2Q"/>
    <property type="match status" value="1"/>
</dbReference>
<dbReference type="FunFam" id="3.10.110.10:FF:000036">
    <property type="entry name" value="ubiquitin-conjugating enzyme E2Q-like protein 1"/>
    <property type="match status" value="1"/>
</dbReference>
<dbReference type="Gene3D" id="3.10.110.10">
    <property type="entry name" value="Ubiquitin Conjugating Enzyme"/>
    <property type="match status" value="1"/>
</dbReference>
<dbReference type="InterPro" id="IPR000608">
    <property type="entry name" value="UBQ-conjugat_E2_core"/>
</dbReference>
<dbReference type="InterPro" id="IPR016135">
    <property type="entry name" value="UBQ-conjugating_enzyme/RWD"/>
</dbReference>
<dbReference type="Pfam" id="PF00179">
    <property type="entry name" value="UQ_con"/>
    <property type="match status" value="1"/>
</dbReference>
<dbReference type="SMART" id="SM00212">
    <property type="entry name" value="UBCc"/>
    <property type="match status" value="1"/>
</dbReference>
<dbReference type="SUPFAM" id="SSF54495">
    <property type="entry name" value="UBC-like"/>
    <property type="match status" value="1"/>
</dbReference>
<dbReference type="PROSITE" id="PS50127">
    <property type="entry name" value="UBC_2"/>
    <property type="match status" value="1"/>
</dbReference>
<evidence type="ECO:0000250" key="1">
    <source>
        <dbReference type="UniProtKB" id="A1L167"/>
    </source>
</evidence>
<evidence type="ECO:0000255" key="2">
    <source>
        <dbReference type="PROSITE-ProRule" id="PRU00388"/>
    </source>
</evidence>
<evidence type="ECO:0000305" key="3"/>
<proteinExistence type="evidence at transcript level"/>
<accession>A0PJN4</accession>
<accession>Q6PDR7</accession>
<protein>
    <recommendedName>
        <fullName>Ubiquitin-conjugating enzyme E2Q-like protein 1</fullName>
        <ecNumber>2.3.2.23</ecNumber>
    </recommendedName>
    <alternativeName>
        <fullName>E2Q-like ubiquitin-conjugating enzyme 1</fullName>
    </alternativeName>
</protein>
<name>U2QL1_MOUSE</name>
<feature type="chain" id="PRO_0000335812" description="Ubiquitin-conjugating enzyme E2Q-like protein 1">
    <location>
        <begin position="1"/>
        <end position="161"/>
    </location>
</feature>
<feature type="domain" description="UBC core" evidence="2">
    <location>
        <begin position="1"/>
        <end position="154"/>
    </location>
</feature>
<feature type="active site" description="Glycyl thioester intermediate" evidence="2">
    <location>
        <position position="88"/>
    </location>
</feature>
<feature type="sequence conflict" description="In Ref. 1; AAH58543." evidence="3" ref="1">
    <original>Q</original>
    <variation>P</variation>
    <location>
        <position position="33"/>
    </location>
</feature>
<gene>
    <name type="primary">Ube2ql1</name>
</gene>
<sequence>MKELQDIARLSDRFISVELVNENLFDWNVKLHQVDKDSVLWQDMKETNTEFILLNLTFPDNFPFSPPFMRVLSPRLENGYVLDGGAICMELLTPRGWSSAYTVEAVMRQFAASLVKGQGRICRKAGKSKKSFSRKEAEATFKSLVKTHEKYGWVTPPVSDG</sequence>
<comment type="function">
    <text evidence="1">Probable E2 ubiquitin-protein ligase that catalyzes the covalent attachment of ubiquitin to target proteins. May facilitate the monoubiquitination and degradation of MTOR and CCNE1 through interaction with FBXW7.</text>
</comment>
<comment type="catalytic activity">
    <reaction evidence="2">
        <text>S-ubiquitinyl-[E1 ubiquitin-activating enzyme]-L-cysteine + [E2 ubiquitin-conjugating enzyme]-L-cysteine = [E1 ubiquitin-activating enzyme]-L-cysteine + S-ubiquitinyl-[E2 ubiquitin-conjugating enzyme]-L-cysteine.</text>
        <dbReference type="EC" id="2.3.2.23"/>
    </reaction>
</comment>
<comment type="pathway">
    <text evidence="2">Protein modification; protein ubiquitination.</text>
</comment>
<comment type="subunit">
    <text evidence="1">Interacts with FBXW7.</text>
</comment>
<comment type="subcellular location">
    <subcellularLocation>
        <location evidence="1">Nucleus</location>
    </subcellularLocation>
</comment>
<comment type="similarity">
    <text evidence="2">Belongs to the ubiquitin-conjugating enzyme family.</text>
</comment>
<comment type="sequence caution" evidence="3">
    <conflict type="erroneous initiation">
        <sequence resource="EMBL-CDS" id="AAI16980"/>
    </conflict>
    <text>Extended N-terminus.</text>
</comment>
<comment type="sequence caution" evidence="3">
    <conflict type="erroneous initiation">
        <sequence resource="EMBL-CDS" id="AAI16982"/>
    </conflict>
    <text>Extended N-terminus.</text>
</comment>
<reference key="1">
    <citation type="journal article" date="2004" name="Genome Res.">
        <title>The status, quality, and expansion of the NIH full-length cDNA project: the Mammalian Gene Collection (MGC).</title>
        <authorList>
            <consortium name="The MGC Project Team"/>
        </authorList>
    </citation>
    <scope>NUCLEOTIDE SEQUENCE [LARGE SCALE MRNA]</scope>
    <source>
        <strain>C57BL/6J</strain>
        <tissue>Brain</tissue>
    </source>
</reference>
<organism>
    <name type="scientific">Mus musculus</name>
    <name type="common">Mouse</name>
    <dbReference type="NCBI Taxonomy" id="10090"/>
    <lineage>
        <taxon>Eukaryota</taxon>
        <taxon>Metazoa</taxon>
        <taxon>Chordata</taxon>
        <taxon>Craniata</taxon>
        <taxon>Vertebrata</taxon>
        <taxon>Euteleostomi</taxon>
        <taxon>Mammalia</taxon>
        <taxon>Eutheria</taxon>
        <taxon>Euarchontoglires</taxon>
        <taxon>Glires</taxon>
        <taxon>Rodentia</taxon>
        <taxon>Myomorpha</taxon>
        <taxon>Muroidea</taxon>
        <taxon>Muridae</taxon>
        <taxon>Murinae</taxon>
        <taxon>Mus</taxon>
        <taxon>Mus</taxon>
    </lineage>
</organism>
<keyword id="KW-0067">ATP-binding</keyword>
<keyword id="KW-0547">Nucleotide-binding</keyword>
<keyword id="KW-0539">Nucleus</keyword>
<keyword id="KW-1185">Reference proteome</keyword>
<keyword id="KW-0808">Transferase</keyword>
<keyword id="KW-0833">Ubl conjugation pathway</keyword>